<protein>
    <recommendedName>
        <fullName evidence="1">Recombination protein RecR</fullName>
    </recommendedName>
</protein>
<dbReference type="EMBL" id="CP001074">
    <property type="protein sequence ID" value="ACE89156.1"/>
    <property type="molecule type" value="Genomic_DNA"/>
</dbReference>
<dbReference type="SMR" id="B3PXF0"/>
<dbReference type="KEGG" id="rec:RHECIAT_CH0000160"/>
<dbReference type="eggNOG" id="COG0353">
    <property type="taxonomic scope" value="Bacteria"/>
</dbReference>
<dbReference type="HOGENOM" id="CLU_060739_1_1_5"/>
<dbReference type="Proteomes" id="UP000008817">
    <property type="component" value="Chromosome"/>
</dbReference>
<dbReference type="GO" id="GO:0003677">
    <property type="term" value="F:DNA binding"/>
    <property type="evidence" value="ECO:0007669"/>
    <property type="project" value="UniProtKB-UniRule"/>
</dbReference>
<dbReference type="GO" id="GO:0008270">
    <property type="term" value="F:zinc ion binding"/>
    <property type="evidence" value="ECO:0007669"/>
    <property type="project" value="UniProtKB-KW"/>
</dbReference>
<dbReference type="GO" id="GO:0006310">
    <property type="term" value="P:DNA recombination"/>
    <property type="evidence" value="ECO:0007669"/>
    <property type="project" value="UniProtKB-UniRule"/>
</dbReference>
<dbReference type="GO" id="GO:0006281">
    <property type="term" value="P:DNA repair"/>
    <property type="evidence" value="ECO:0007669"/>
    <property type="project" value="UniProtKB-UniRule"/>
</dbReference>
<dbReference type="CDD" id="cd01025">
    <property type="entry name" value="TOPRIM_recR"/>
    <property type="match status" value="1"/>
</dbReference>
<dbReference type="Gene3D" id="3.40.1360.10">
    <property type="match status" value="1"/>
</dbReference>
<dbReference type="Gene3D" id="6.10.250.240">
    <property type="match status" value="1"/>
</dbReference>
<dbReference type="Gene3D" id="1.10.8.420">
    <property type="entry name" value="RecR Domain 1"/>
    <property type="match status" value="1"/>
</dbReference>
<dbReference type="HAMAP" id="MF_00017">
    <property type="entry name" value="RecR"/>
    <property type="match status" value="1"/>
</dbReference>
<dbReference type="InterPro" id="IPR000093">
    <property type="entry name" value="DNA_Rcmb_RecR"/>
</dbReference>
<dbReference type="InterPro" id="IPR023627">
    <property type="entry name" value="Rcmb_RecR"/>
</dbReference>
<dbReference type="InterPro" id="IPR015967">
    <property type="entry name" value="Rcmb_RecR_Znf"/>
</dbReference>
<dbReference type="InterPro" id="IPR006171">
    <property type="entry name" value="TOPRIM_dom"/>
</dbReference>
<dbReference type="InterPro" id="IPR034137">
    <property type="entry name" value="TOPRIM_RecR"/>
</dbReference>
<dbReference type="NCBIfam" id="TIGR00615">
    <property type="entry name" value="recR"/>
    <property type="match status" value="1"/>
</dbReference>
<dbReference type="PANTHER" id="PTHR30446">
    <property type="entry name" value="RECOMBINATION PROTEIN RECR"/>
    <property type="match status" value="1"/>
</dbReference>
<dbReference type="PANTHER" id="PTHR30446:SF0">
    <property type="entry name" value="RECOMBINATION PROTEIN RECR"/>
    <property type="match status" value="1"/>
</dbReference>
<dbReference type="Pfam" id="PF21175">
    <property type="entry name" value="RecR_C"/>
    <property type="match status" value="1"/>
</dbReference>
<dbReference type="Pfam" id="PF21176">
    <property type="entry name" value="RecR_HhH"/>
    <property type="match status" value="1"/>
</dbReference>
<dbReference type="Pfam" id="PF02132">
    <property type="entry name" value="RecR_ZnF"/>
    <property type="match status" value="1"/>
</dbReference>
<dbReference type="Pfam" id="PF13662">
    <property type="entry name" value="Toprim_4"/>
    <property type="match status" value="1"/>
</dbReference>
<dbReference type="SMART" id="SM00493">
    <property type="entry name" value="TOPRIM"/>
    <property type="match status" value="1"/>
</dbReference>
<dbReference type="SUPFAM" id="SSF111304">
    <property type="entry name" value="Recombination protein RecR"/>
    <property type="match status" value="1"/>
</dbReference>
<dbReference type="PROSITE" id="PS01300">
    <property type="entry name" value="RECR"/>
    <property type="match status" value="1"/>
</dbReference>
<dbReference type="PROSITE" id="PS50880">
    <property type="entry name" value="TOPRIM"/>
    <property type="match status" value="1"/>
</dbReference>
<organism>
    <name type="scientific">Rhizobium etli (strain CIAT 652)</name>
    <dbReference type="NCBI Taxonomy" id="491916"/>
    <lineage>
        <taxon>Bacteria</taxon>
        <taxon>Pseudomonadati</taxon>
        <taxon>Pseudomonadota</taxon>
        <taxon>Alphaproteobacteria</taxon>
        <taxon>Hyphomicrobiales</taxon>
        <taxon>Rhizobiaceae</taxon>
        <taxon>Rhizobium/Agrobacterium group</taxon>
        <taxon>Rhizobium</taxon>
    </lineage>
</organism>
<proteinExistence type="inferred from homology"/>
<name>RECR_RHIE6</name>
<accession>B3PXF0</accession>
<reference key="1">
    <citation type="journal article" date="2010" name="Appl. Environ. Microbiol.">
        <title>Conserved symbiotic plasmid DNA sequences in the multireplicon pangenomic structure of Rhizobium etli.</title>
        <authorList>
            <person name="Gonzalez V."/>
            <person name="Acosta J.L."/>
            <person name="Santamaria R.I."/>
            <person name="Bustos P."/>
            <person name="Fernandez J.L."/>
            <person name="Hernandez Gonzalez I.L."/>
            <person name="Diaz R."/>
            <person name="Flores M."/>
            <person name="Palacios R."/>
            <person name="Mora J."/>
            <person name="Davila G."/>
        </authorList>
    </citation>
    <scope>NUCLEOTIDE SEQUENCE [LARGE SCALE GENOMIC DNA]</scope>
    <source>
        <strain>CIAT 652</strain>
    </source>
</reference>
<gene>
    <name evidence="1" type="primary">recR</name>
    <name type="ordered locus">RHECIAT_CH0000160</name>
</gene>
<keyword id="KW-0227">DNA damage</keyword>
<keyword id="KW-0233">DNA recombination</keyword>
<keyword id="KW-0234">DNA repair</keyword>
<keyword id="KW-0479">Metal-binding</keyword>
<keyword id="KW-0862">Zinc</keyword>
<keyword id="KW-0863">Zinc-finger</keyword>
<comment type="function">
    <text evidence="1">May play a role in DNA repair. It seems to be involved in an RecBC-independent recombinational process of DNA repair. It may act with RecF and RecO.</text>
</comment>
<comment type="similarity">
    <text evidence="1">Belongs to the RecR family.</text>
</comment>
<feature type="chain" id="PRO_1000089759" description="Recombination protein RecR">
    <location>
        <begin position="1"/>
        <end position="201"/>
    </location>
</feature>
<feature type="domain" description="Toprim" evidence="1">
    <location>
        <begin position="83"/>
        <end position="178"/>
    </location>
</feature>
<feature type="zinc finger region" description="C4-type" evidence="1">
    <location>
        <begin position="60"/>
        <end position="75"/>
    </location>
</feature>
<evidence type="ECO:0000255" key="1">
    <source>
        <dbReference type="HAMAP-Rule" id="MF_00017"/>
    </source>
</evidence>
<sequence>MAKRVTGPEIEKLIQLLAKVPGLGPRSARRAALHLIKKKDQLLGPLSNAMGEAYDKVKICSRCGNVDTVDPCTVCTDAQRDQSVIIVVEDVSDLWALERAGAMNAAYHVLGGTLSPLDGIGPDDLNIRGLIDRIGEGGIRELIIAVNATVEGQTTAHYITDQLQGLDVKITRLAHGVPVGGELDYLDEGTLAAALRARTVI</sequence>